<protein>
    <recommendedName>
        <fullName evidence="1">Lactate utilization protein C</fullName>
    </recommendedName>
</protein>
<reference key="1">
    <citation type="submission" date="2008-10" db="EMBL/GenBank/DDBJ databases">
        <title>Genome sequence of Bacillus cereus AH187.</title>
        <authorList>
            <person name="Dodson R.J."/>
            <person name="Durkin A.S."/>
            <person name="Rosovitz M.J."/>
            <person name="Rasko D.A."/>
            <person name="Kolsto A.B."/>
            <person name="Okstad O.A."/>
            <person name="Ravel J."/>
            <person name="Sutton G."/>
        </authorList>
    </citation>
    <scope>NUCLEOTIDE SEQUENCE [LARGE SCALE GENOMIC DNA]</scope>
    <source>
        <strain>AH187</strain>
    </source>
</reference>
<gene>
    <name evidence="1" type="primary">lutC</name>
    <name type="ordered locus">BCAH187_A1458</name>
</gene>
<dbReference type="EMBL" id="CP001177">
    <property type="protein sequence ID" value="ACJ80630.1"/>
    <property type="molecule type" value="Genomic_DNA"/>
</dbReference>
<dbReference type="SMR" id="B7I0L1"/>
<dbReference type="KEGG" id="bcr:BCAH187_A1458"/>
<dbReference type="HOGENOM" id="CLU_090664_1_0_9"/>
<dbReference type="Proteomes" id="UP000002214">
    <property type="component" value="Chromosome"/>
</dbReference>
<dbReference type="GO" id="GO:0006089">
    <property type="term" value="P:lactate metabolic process"/>
    <property type="evidence" value="ECO:0007669"/>
    <property type="project" value="UniProtKB-UniRule"/>
</dbReference>
<dbReference type="Gene3D" id="3.40.50.10420">
    <property type="entry name" value="NagB/RpiA/CoA transferase-like"/>
    <property type="match status" value="1"/>
</dbReference>
<dbReference type="HAMAP" id="MF_02104">
    <property type="entry name" value="LutC"/>
    <property type="match status" value="1"/>
</dbReference>
<dbReference type="InterPro" id="IPR024185">
    <property type="entry name" value="FTHF_cligase-like_sf"/>
</dbReference>
<dbReference type="InterPro" id="IPR003741">
    <property type="entry name" value="LUD_dom"/>
</dbReference>
<dbReference type="InterPro" id="IPR022823">
    <property type="entry name" value="LutC"/>
</dbReference>
<dbReference type="InterPro" id="IPR037171">
    <property type="entry name" value="NagB/RpiA_transferase-like"/>
</dbReference>
<dbReference type="PANTHER" id="PTHR43682">
    <property type="entry name" value="LACTATE UTILIZATION PROTEIN C"/>
    <property type="match status" value="1"/>
</dbReference>
<dbReference type="PANTHER" id="PTHR43682:SF1">
    <property type="entry name" value="LACTATE UTILIZATION PROTEIN C"/>
    <property type="match status" value="1"/>
</dbReference>
<dbReference type="Pfam" id="PF02589">
    <property type="entry name" value="LUD_dom"/>
    <property type="match status" value="1"/>
</dbReference>
<dbReference type="SUPFAM" id="SSF100950">
    <property type="entry name" value="NagB/RpiA/CoA transferase-like"/>
    <property type="match status" value="1"/>
</dbReference>
<feature type="chain" id="PRO_0000383998" description="Lactate utilization protein C">
    <location>
        <begin position="1"/>
        <end position="236"/>
    </location>
</feature>
<proteinExistence type="inferred from homology"/>
<organism>
    <name type="scientific">Bacillus cereus (strain AH187)</name>
    <dbReference type="NCBI Taxonomy" id="405534"/>
    <lineage>
        <taxon>Bacteria</taxon>
        <taxon>Bacillati</taxon>
        <taxon>Bacillota</taxon>
        <taxon>Bacilli</taxon>
        <taxon>Bacillales</taxon>
        <taxon>Bacillaceae</taxon>
        <taxon>Bacillus</taxon>
        <taxon>Bacillus cereus group</taxon>
    </lineage>
</organism>
<evidence type="ECO:0000255" key="1">
    <source>
        <dbReference type="HAMAP-Rule" id="MF_02104"/>
    </source>
</evidence>
<sequence length="236" mass="26561">MTGLIQNRESFLENIAKELGRARKTDGVKRPVWKNNVNKETLKNYSQEELLEVFKNQCTNIHTTVVETTNDRLREDIQKVIVENGGGPIMLSADERFDSYGLTSLFKEELPKQNVEVNVWDPEKKEENMRIAERANIGIAFSDYTLAESGTIVVQSHKGQGRSLHFLPTVYLAIIPRETLVPRITQAVEDMNKRVENGETVASCINFITGPSNSADIEMNLVVGVHGPLKAVYFIV</sequence>
<name>LUTC_BACC7</name>
<comment type="function">
    <text evidence="1">Is involved in L-lactate degradation and allows cells to grow with lactate as the sole carbon source.</text>
</comment>
<comment type="similarity">
    <text evidence="1">Belongs to the LutC/YkgG family.</text>
</comment>
<accession>B7I0L1</accession>